<dbReference type="EMBL" id="AK006511">
    <property type="protein sequence ID" value="BAB24626.1"/>
    <property type="molecule type" value="mRNA"/>
</dbReference>
<dbReference type="EMBL" id="AC154597">
    <property type="status" value="NOT_ANNOTATED_CDS"/>
    <property type="molecule type" value="Genomic_DNA"/>
</dbReference>
<dbReference type="EMBL" id="CH466573">
    <property type="protein sequence ID" value="EDL24916.1"/>
    <property type="molecule type" value="Genomic_DNA"/>
</dbReference>
<dbReference type="EMBL" id="BC049632">
    <property type="protein sequence ID" value="AAH49632.1"/>
    <property type="molecule type" value="mRNA"/>
</dbReference>
<dbReference type="CCDS" id="CCDS49451.1">
    <molecule id="Q9D9T0-1"/>
</dbReference>
<dbReference type="RefSeq" id="NP_001405483.1">
    <molecule id="Q9D9T0-1"/>
    <property type="nucleotide sequence ID" value="NM_001418554.1"/>
</dbReference>
<dbReference type="RefSeq" id="NP_081370.1">
    <molecule id="Q9D9T0-1"/>
    <property type="nucleotide sequence ID" value="NM_027094.2"/>
</dbReference>
<dbReference type="SMR" id="Q9D9T0"/>
<dbReference type="BioGRID" id="213484">
    <property type="interactions" value="2"/>
</dbReference>
<dbReference type="ComplexPortal" id="CPX-8161">
    <property type="entry name" value="Radial spoke complex, ciliiar variant"/>
</dbReference>
<dbReference type="ComplexPortal" id="CPX-8162">
    <property type="entry name" value="Radial spoke complex, flagellar variant"/>
</dbReference>
<dbReference type="FunCoup" id="Q9D9T0">
    <property type="interactions" value="14"/>
</dbReference>
<dbReference type="STRING" id="10090.ENSMUSP00000139412"/>
<dbReference type="iPTMnet" id="Q9D9T0"/>
<dbReference type="PhosphoSitePlus" id="Q9D9T0"/>
<dbReference type="PaxDb" id="10090-ENSMUSP00000124785"/>
<dbReference type="ProteomicsDB" id="279586">
    <molecule id="Q9D9T0-1"/>
</dbReference>
<dbReference type="ProteomicsDB" id="279587">
    <molecule id="Q9D9T0-2"/>
</dbReference>
<dbReference type="Antibodypedia" id="29980">
    <property type="antibodies" value="177 antibodies from 28 providers"/>
</dbReference>
<dbReference type="Ensembl" id="ENSMUST00000022315.12">
    <molecule id="Q9D9T0-1"/>
    <property type="protein sequence ID" value="ENSMUSP00000022315.6"/>
    <property type="gene ID" value="ENSMUSG00000021790.13"/>
</dbReference>
<dbReference type="Ensembl" id="ENSMUST00000189865.7">
    <molecule id="Q9D9T0-1"/>
    <property type="protein sequence ID" value="ENSMUSP00000139412.2"/>
    <property type="gene ID" value="ENSMUSG00000021790.13"/>
</dbReference>
<dbReference type="GeneID" id="69496"/>
<dbReference type="KEGG" id="mmu:69496"/>
<dbReference type="UCSC" id="uc007tcl.2">
    <molecule id="Q9D9T0-1"/>
    <property type="organism name" value="mouse"/>
</dbReference>
<dbReference type="AGR" id="MGI:1916746"/>
<dbReference type="CTD" id="143241"/>
<dbReference type="MGI" id="MGI:1916746">
    <property type="gene designation" value="Dydc1"/>
</dbReference>
<dbReference type="VEuPathDB" id="HostDB:ENSMUSG00000021790"/>
<dbReference type="eggNOG" id="ENOG502S3U3">
    <property type="taxonomic scope" value="Eukaryota"/>
</dbReference>
<dbReference type="GeneTree" id="ENSGT00940000161631"/>
<dbReference type="InParanoid" id="Q9D9T0"/>
<dbReference type="OrthoDB" id="432281at2759"/>
<dbReference type="BioGRID-ORCS" id="69496">
    <property type="hits" value="3 hits in 76 CRISPR screens"/>
</dbReference>
<dbReference type="PRO" id="PR:Q9D9T0"/>
<dbReference type="Proteomes" id="UP000000589">
    <property type="component" value="Chromosome 14"/>
</dbReference>
<dbReference type="RNAct" id="Q9D9T0">
    <property type="molecule type" value="protein"/>
</dbReference>
<dbReference type="Bgee" id="ENSMUSG00000021790">
    <property type="expression patterns" value="Expressed in spermatid and 18 other cell types or tissues"/>
</dbReference>
<dbReference type="ExpressionAtlas" id="Q9D9T0">
    <property type="expression patterns" value="baseline and differential"/>
</dbReference>
<dbReference type="GO" id="GO:0097729">
    <property type="term" value="C:9+2 motile cilium"/>
    <property type="evidence" value="ECO:0000305"/>
    <property type="project" value="UniProtKB"/>
</dbReference>
<dbReference type="GO" id="GO:0005576">
    <property type="term" value="C:extracellular region"/>
    <property type="evidence" value="ECO:0007669"/>
    <property type="project" value="GOC"/>
</dbReference>
<dbReference type="GO" id="GO:0001534">
    <property type="term" value="C:radial spoke"/>
    <property type="evidence" value="ECO:0000314"/>
    <property type="project" value="UniProtKB"/>
</dbReference>
<dbReference type="GO" id="GO:0048188">
    <property type="term" value="C:Set1C/COMPASS complex"/>
    <property type="evidence" value="ECO:0007669"/>
    <property type="project" value="InterPro"/>
</dbReference>
<dbReference type="GO" id="GO:0036126">
    <property type="term" value="C:sperm flagellum"/>
    <property type="evidence" value="ECO:0000305"/>
    <property type="project" value="UniProtKB"/>
</dbReference>
<dbReference type="GO" id="GO:0003351">
    <property type="term" value="P:epithelial cilium movement involved in extracellular fluid movement"/>
    <property type="evidence" value="ECO:0000305"/>
    <property type="project" value="UniProtKB"/>
</dbReference>
<dbReference type="GO" id="GO:0030317">
    <property type="term" value="P:flagellated sperm motility"/>
    <property type="evidence" value="ECO:0000305"/>
    <property type="project" value="UniProtKB"/>
</dbReference>
<dbReference type="GO" id="GO:0007618">
    <property type="term" value="P:mating"/>
    <property type="evidence" value="ECO:0000305"/>
    <property type="project" value="UniProtKB"/>
</dbReference>
<dbReference type="CDD" id="cd22966">
    <property type="entry name" value="DD_DYDC-like"/>
    <property type="match status" value="1"/>
</dbReference>
<dbReference type="FunFam" id="1.20.890.10:FF:000009">
    <property type="entry name" value="DPY30 domain-containing protein 1"/>
    <property type="match status" value="1"/>
</dbReference>
<dbReference type="Gene3D" id="1.20.890.10">
    <property type="entry name" value="cAMP-dependent protein kinase regulatory subunit, dimerization-anchoring domain"/>
    <property type="match status" value="1"/>
</dbReference>
<dbReference type="InterPro" id="IPR007858">
    <property type="entry name" value="Dpy-30_motif"/>
</dbReference>
<dbReference type="InterPro" id="IPR049630">
    <property type="entry name" value="DYDC-like_DD"/>
</dbReference>
<dbReference type="InterPro" id="IPR037856">
    <property type="entry name" value="Sdc1/DPY30"/>
</dbReference>
<dbReference type="PANTHER" id="PTHR23356:SF4">
    <property type="entry name" value="DPY30 DOMAIN-CONTAINING PROTEIN 1"/>
    <property type="match status" value="1"/>
</dbReference>
<dbReference type="PANTHER" id="PTHR23356">
    <property type="entry name" value="DPY30-RELATED"/>
    <property type="match status" value="1"/>
</dbReference>
<dbReference type="Pfam" id="PF05186">
    <property type="entry name" value="Dpy-30"/>
    <property type="match status" value="1"/>
</dbReference>
<reference key="1">
    <citation type="journal article" date="2005" name="Science">
        <title>The transcriptional landscape of the mammalian genome.</title>
        <authorList>
            <person name="Carninci P."/>
            <person name="Kasukawa T."/>
            <person name="Katayama S."/>
            <person name="Gough J."/>
            <person name="Frith M.C."/>
            <person name="Maeda N."/>
            <person name="Oyama R."/>
            <person name="Ravasi T."/>
            <person name="Lenhard B."/>
            <person name="Wells C."/>
            <person name="Kodzius R."/>
            <person name="Shimokawa K."/>
            <person name="Bajic V.B."/>
            <person name="Brenner S.E."/>
            <person name="Batalov S."/>
            <person name="Forrest A.R."/>
            <person name="Zavolan M."/>
            <person name="Davis M.J."/>
            <person name="Wilming L.G."/>
            <person name="Aidinis V."/>
            <person name="Allen J.E."/>
            <person name="Ambesi-Impiombato A."/>
            <person name="Apweiler R."/>
            <person name="Aturaliya R.N."/>
            <person name="Bailey T.L."/>
            <person name="Bansal M."/>
            <person name="Baxter L."/>
            <person name="Beisel K.W."/>
            <person name="Bersano T."/>
            <person name="Bono H."/>
            <person name="Chalk A.M."/>
            <person name="Chiu K.P."/>
            <person name="Choudhary V."/>
            <person name="Christoffels A."/>
            <person name="Clutterbuck D.R."/>
            <person name="Crowe M.L."/>
            <person name="Dalla E."/>
            <person name="Dalrymple B.P."/>
            <person name="de Bono B."/>
            <person name="Della Gatta G."/>
            <person name="di Bernardo D."/>
            <person name="Down T."/>
            <person name="Engstrom P."/>
            <person name="Fagiolini M."/>
            <person name="Faulkner G."/>
            <person name="Fletcher C.F."/>
            <person name="Fukushima T."/>
            <person name="Furuno M."/>
            <person name="Futaki S."/>
            <person name="Gariboldi M."/>
            <person name="Georgii-Hemming P."/>
            <person name="Gingeras T.R."/>
            <person name="Gojobori T."/>
            <person name="Green R.E."/>
            <person name="Gustincich S."/>
            <person name="Harbers M."/>
            <person name="Hayashi Y."/>
            <person name="Hensch T.K."/>
            <person name="Hirokawa N."/>
            <person name="Hill D."/>
            <person name="Huminiecki L."/>
            <person name="Iacono M."/>
            <person name="Ikeo K."/>
            <person name="Iwama A."/>
            <person name="Ishikawa T."/>
            <person name="Jakt M."/>
            <person name="Kanapin A."/>
            <person name="Katoh M."/>
            <person name="Kawasawa Y."/>
            <person name="Kelso J."/>
            <person name="Kitamura H."/>
            <person name="Kitano H."/>
            <person name="Kollias G."/>
            <person name="Krishnan S.P."/>
            <person name="Kruger A."/>
            <person name="Kummerfeld S.K."/>
            <person name="Kurochkin I.V."/>
            <person name="Lareau L.F."/>
            <person name="Lazarevic D."/>
            <person name="Lipovich L."/>
            <person name="Liu J."/>
            <person name="Liuni S."/>
            <person name="McWilliam S."/>
            <person name="Madan Babu M."/>
            <person name="Madera M."/>
            <person name="Marchionni L."/>
            <person name="Matsuda H."/>
            <person name="Matsuzawa S."/>
            <person name="Miki H."/>
            <person name="Mignone F."/>
            <person name="Miyake S."/>
            <person name="Morris K."/>
            <person name="Mottagui-Tabar S."/>
            <person name="Mulder N."/>
            <person name="Nakano N."/>
            <person name="Nakauchi H."/>
            <person name="Ng P."/>
            <person name="Nilsson R."/>
            <person name="Nishiguchi S."/>
            <person name="Nishikawa S."/>
            <person name="Nori F."/>
            <person name="Ohara O."/>
            <person name="Okazaki Y."/>
            <person name="Orlando V."/>
            <person name="Pang K.C."/>
            <person name="Pavan W.J."/>
            <person name="Pavesi G."/>
            <person name="Pesole G."/>
            <person name="Petrovsky N."/>
            <person name="Piazza S."/>
            <person name="Reed J."/>
            <person name="Reid J.F."/>
            <person name="Ring B.Z."/>
            <person name="Ringwald M."/>
            <person name="Rost B."/>
            <person name="Ruan Y."/>
            <person name="Salzberg S.L."/>
            <person name="Sandelin A."/>
            <person name="Schneider C."/>
            <person name="Schoenbach C."/>
            <person name="Sekiguchi K."/>
            <person name="Semple C.A."/>
            <person name="Seno S."/>
            <person name="Sessa L."/>
            <person name="Sheng Y."/>
            <person name="Shibata Y."/>
            <person name="Shimada H."/>
            <person name="Shimada K."/>
            <person name="Silva D."/>
            <person name="Sinclair B."/>
            <person name="Sperling S."/>
            <person name="Stupka E."/>
            <person name="Sugiura K."/>
            <person name="Sultana R."/>
            <person name="Takenaka Y."/>
            <person name="Taki K."/>
            <person name="Tammoja K."/>
            <person name="Tan S.L."/>
            <person name="Tang S."/>
            <person name="Taylor M.S."/>
            <person name="Tegner J."/>
            <person name="Teichmann S.A."/>
            <person name="Ueda H.R."/>
            <person name="van Nimwegen E."/>
            <person name="Verardo R."/>
            <person name="Wei C.L."/>
            <person name="Yagi K."/>
            <person name="Yamanishi H."/>
            <person name="Zabarovsky E."/>
            <person name="Zhu S."/>
            <person name="Zimmer A."/>
            <person name="Hide W."/>
            <person name="Bult C."/>
            <person name="Grimmond S.M."/>
            <person name="Teasdale R.D."/>
            <person name="Liu E.T."/>
            <person name="Brusic V."/>
            <person name="Quackenbush J."/>
            <person name="Wahlestedt C."/>
            <person name="Mattick J.S."/>
            <person name="Hume D.A."/>
            <person name="Kai C."/>
            <person name="Sasaki D."/>
            <person name="Tomaru Y."/>
            <person name="Fukuda S."/>
            <person name="Kanamori-Katayama M."/>
            <person name="Suzuki M."/>
            <person name="Aoki J."/>
            <person name="Arakawa T."/>
            <person name="Iida J."/>
            <person name="Imamura K."/>
            <person name="Itoh M."/>
            <person name="Kato T."/>
            <person name="Kawaji H."/>
            <person name="Kawagashira N."/>
            <person name="Kawashima T."/>
            <person name="Kojima M."/>
            <person name="Kondo S."/>
            <person name="Konno H."/>
            <person name="Nakano K."/>
            <person name="Ninomiya N."/>
            <person name="Nishio T."/>
            <person name="Okada M."/>
            <person name="Plessy C."/>
            <person name="Shibata K."/>
            <person name="Shiraki T."/>
            <person name="Suzuki S."/>
            <person name="Tagami M."/>
            <person name="Waki K."/>
            <person name="Watahiki A."/>
            <person name="Okamura-Oho Y."/>
            <person name="Suzuki H."/>
            <person name="Kawai J."/>
            <person name="Hayashizaki Y."/>
        </authorList>
    </citation>
    <scope>NUCLEOTIDE SEQUENCE [LARGE SCALE MRNA] (ISOFORM 1)</scope>
    <source>
        <strain>C57BL/6J</strain>
        <tissue>Testis</tissue>
    </source>
</reference>
<reference key="2">
    <citation type="journal article" date="2009" name="PLoS Biol.">
        <title>Lineage-specific biology revealed by a finished genome assembly of the mouse.</title>
        <authorList>
            <person name="Church D.M."/>
            <person name="Goodstadt L."/>
            <person name="Hillier L.W."/>
            <person name="Zody M.C."/>
            <person name="Goldstein S."/>
            <person name="She X."/>
            <person name="Bult C.J."/>
            <person name="Agarwala R."/>
            <person name="Cherry J.L."/>
            <person name="DiCuccio M."/>
            <person name="Hlavina W."/>
            <person name="Kapustin Y."/>
            <person name="Meric P."/>
            <person name="Maglott D."/>
            <person name="Birtle Z."/>
            <person name="Marques A.C."/>
            <person name="Graves T."/>
            <person name="Zhou S."/>
            <person name="Teague B."/>
            <person name="Potamousis K."/>
            <person name="Churas C."/>
            <person name="Place M."/>
            <person name="Herschleb J."/>
            <person name="Runnheim R."/>
            <person name="Forrest D."/>
            <person name="Amos-Landgraf J."/>
            <person name="Schwartz D.C."/>
            <person name="Cheng Z."/>
            <person name="Lindblad-Toh K."/>
            <person name="Eichler E.E."/>
            <person name="Ponting C.P."/>
        </authorList>
    </citation>
    <scope>NUCLEOTIDE SEQUENCE [LARGE SCALE GENOMIC DNA]</scope>
    <source>
        <strain>C57BL/6J</strain>
    </source>
</reference>
<reference key="3">
    <citation type="submission" date="2005-07" db="EMBL/GenBank/DDBJ databases">
        <authorList>
            <person name="Mural R.J."/>
            <person name="Adams M.D."/>
            <person name="Myers E.W."/>
            <person name="Smith H.O."/>
            <person name="Venter J.C."/>
        </authorList>
    </citation>
    <scope>NUCLEOTIDE SEQUENCE [LARGE SCALE GENOMIC DNA]</scope>
</reference>
<reference key="4">
    <citation type="journal article" date="2004" name="Genome Res.">
        <title>The status, quality, and expansion of the NIH full-length cDNA project: the Mammalian Gene Collection (MGC).</title>
        <authorList>
            <consortium name="The MGC Project Team"/>
        </authorList>
    </citation>
    <scope>NUCLEOTIDE SEQUENCE [LARGE SCALE MRNA] (ISOFORM 2)</scope>
    <source>
        <tissue>Testis</tissue>
    </source>
</reference>
<reference key="5">
    <citation type="journal article" date="2009" name="Eur. J. Cell Biol.">
        <title>Interaction of SH3P13 and DYDC1 protein: a germ cell component that regulates acrosome biogenesis during spermiogenesis.</title>
        <authorList>
            <person name="Li S."/>
            <person name="Qiao Y."/>
            <person name="Di Q."/>
            <person name="Le X."/>
            <person name="Zhang L."/>
            <person name="Zhang X."/>
            <person name="Zhang C."/>
            <person name="Cheng J."/>
            <person name="Zong S."/>
            <person name="Koide S.S."/>
            <person name="Miao S."/>
            <person name="Wang L."/>
        </authorList>
    </citation>
    <scope>FUNCTION</scope>
</reference>
<reference key="6">
    <citation type="journal article" date="2022" name="Cell Rep.">
        <title>Differential requirements of IQUB for the assembly of radial spoke 1 and the motility of mouse cilia and flagella.</title>
        <authorList>
            <person name="Zhang X."/>
            <person name="Xiao Z."/>
            <person name="Zhang J."/>
            <person name="Xu C."/>
            <person name="Liu S."/>
            <person name="Cheng L."/>
            <person name="Zhou S."/>
            <person name="Zhao S."/>
            <person name="Zhang Y."/>
            <person name="Wu J."/>
            <person name="Wang Y."/>
            <person name="Liu M."/>
        </authorList>
    </citation>
    <scope>FUNCTION</scope>
    <scope>IDENTIFICATION IN RADIAL SPOKE COMPLEX 1</scope>
    <scope>IDENTIFICATION BY MASS SPECTROMETRY</scope>
    <scope>SUBCELLULAR LOCATION</scope>
</reference>
<keyword id="KW-0025">Alternative splicing</keyword>
<keyword id="KW-0966">Cell projection</keyword>
<keyword id="KW-0969">Cilium</keyword>
<keyword id="KW-0963">Cytoplasm</keyword>
<keyword id="KW-0206">Cytoskeleton</keyword>
<keyword id="KW-0282">Flagellum</keyword>
<keyword id="KW-1185">Reference proteome</keyword>
<comment type="function">
    <text evidence="3 4">Functions as part of axonemal radial spoke complexes that play an important part in the motility of sperm and cilia (PubMed:36417862). Plays a crucial role during acrosome biogenesis (PubMed:19545932).</text>
</comment>
<comment type="subunit">
    <text evidence="1 4">Component of the axonemal radial spoke complex 1 (RS1), at least composed of spoke head proteins RSPH1, RSPH3, RSPH9 and the cilia-specific component RSPH4A or sperm-specific component RSPH6A, spoke stalk proteins RSPH14, DNAJB13, DYDC1, ROPN1L and NME5, and the anchor protein IQUB (PubMed:36417862). Interacts with SH3GL3 (By similarity).</text>
</comment>
<comment type="subcellular location">
    <subcellularLocation>
        <location evidence="7">Cytoplasm</location>
        <location evidence="7">Cytoskeleton</location>
        <location evidence="7">Flagellum axoneme</location>
    </subcellularLocation>
</comment>
<comment type="alternative products">
    <event type="alternative splicing"/>
    <isoform>
        <id>Q9D9T0-1</id>
        <name>1</name>
        <sequence type="displayed"/>
    </isoform>
    <isoform>
        <id>Q9D9T0-2</id>
        <name>2</name>
        <sequence type="described" ref="VSP_020012"/>
    </isoform>
</comment>
<comment type="similarity">
    <text evidence="6">Belongs to the dpy-30 family.</text>
</comment>
<sequence>MESRYLQKCLGTCLTQGLTEVARVRPLDPIEYLAFWLYKHKENMNMEQMRQREMITLEHERELAMMEQEMLERLKAEELLFQQQLAFQLELEMQQKEKQKSEDFETGQEKSFKSMMSMESTARGEEQEPMQAEELVMDSGKTLAEISDRYGAPNLSRVEELDEPMLSDNGVSAPP</sequence>
<evidence type="ECO:0000250" key="1">
    <source>
        <dbReference type="UniProtKB" id="Q8WWB3"/>
    </source>
</evidence>
<evidence type="ECO:0000256" key="2">
    <source>
        <dbReference type="SAM" id="MobiDB-lite"/>
    </source>
</evidence>
<evidence type="ECO:0000269" key="3">
    <source>
    </source>
</evidence>
<evidence type="ECO:0000269" key="4">
    <source>
    </source>
</evidence>
<evidence type="ECO:0000303" key="5">
    <source>
    </source>
</evidence>
<evidence type="ECO:0000305" key="6"/>
<evidence type="ECO:0000305" key="7">
    <source>
    </source>
</evidence>
<name>DYDC1_MOUSE</name>
<accession>Q9D9T0</accession>
<accession>G3X8U6</accession>
<accession>Q810Q6</accession>
<gene>
    <name type="primary">Dydc1</name>
</gene>
<organism>
    <name type="scientific">Mus musculus</name>
    <name type="common">Mouse</name>
    <dbReference type="NCBI Taxonomy" id="10090"/>
    <lineage>
        <taxon>Eukaryota</taxon>
        <taxon>Metazoa</taxon>
        <taxon>Chordata</taxon>
        <taxon>Craniata</taxon>
        <taxon>Vertebrata</taxon>
        <taxon>Euteleostomi</taxon>
        <taxon>Mammalia</taxon>
        <taxon>Eutheria</taxon>
        <taxon>Euarchontoglires</taxon>
        <taxon>Glires</taxon>
        <taxon>Rodentia</taxon>
        <taxon>Myomorpha</taxon>
        <taxon>Muroidea</taxon>
        <taxon>Muridae</taxon>
        <taxon>Murinae</taxon>
        <taxon>Mus</taxon>
        <taxon>Mus</taxon>
    </lineage>
</organism>
<protein>
    <recommendedName>
        <fullName>DPY30 domain-containing protein 1</fullName>
    </recommendedName>
</protein>
<proteinExistence type="evidence at protein level"/>
<feature type="chain" id="PRO_0000247557" description="DPY30 domain-containing protein 1">
    <location>
        <begin position="1"/>
        <end position="175"/>
    </location>
</feature>
<feature type="region of interest" description="Disordered" evidence="2">
    <location>
        <begin position="94"/>
        <end position="134"/>
    </location>
</feature>
<feature type="region of interest" description="Disordered" evidence="2">
    <location>
        <begin position="152"/>
        <end position="175"/>
    </location>
</feature>
<feature type="compositionally biased region" description="Basic and acidic residues" evidence="2">
    <location>
        <begin position="94"/>
        <end position="112"/>
    </location>
</feature>
<feature type="splice variant" id="VSP_020012" description="In isoform 2." evidence="5">
    <location>
        <begin position="69"/>
        <end position="84"/>
    </location>
</feature>
<feature type="sequence conflict" description="In Ref. 1; BAB24626." evidence="6" ref="1">
    <original>A</original>
    <variation>E</variation>
    <location>
        <position position="152"/>
    </location>
</feature>